<accession>Q9HXZ6</accession>
<proteinExistence type="evidence at protein level"/>
<evidence type="ECO:0000255" key="1">
    <source>
        <dbReference type="HAMAP-Rule" id="MF_00599"/>
    </source>
</evidence>
<evidence type="ECO:0007829" key="2">
    <source>
        <dbReference type="PDB" id="8P1U"/>
    </source>
</evidence>
<reference key="1">
    <citation type="journal article" date="2000" name="Nature">
        <title>Complete genome sequence of Pseudomonas aeruginosa PAO1, an opportunistic pathogen.</title>
        <authorList>
            <person name="Stover C.K."/>
            <person name="Pham X.-Q.T."/>
            <person name="Erwin A.L."/>
            <person name="Mizoguchi S.D."/>
            <person name="Warrener P."/>
            <person name="Hickey M.J."/>
            <person name="Brinkman F.S.L."/>
            <person name="Hufnagle W.O."/>
            <person name="Kowalik D.J."/>
            <person name="Lagrou M."/>
            <person name="Garber R.L."/>
            <person name="Goltry L."/>
            <person name="Tolentino E."/>
            <person name="Westbrock-Wadman S."/>
            <person name="Yuan Y."/>
            <person name="Brody L.L."/>
            <person name="Coulter S.N."/>
            <person name="Folger K.R."/>
            <person name="Kas A."/>
            <person name="Larbig K."/>
            <person name="Lim R.M."/>
            <person name="Smith K.A."/>
            <person name="Spencer D.H."/>
            <person name="Wong G.K.-S."/>
            <person name="Wu Z."/>
            <person name="Paulsen I.T."/>
            <person name="Reizer J."/>
            <person name="Saier M.H. Jr."/>
            <person name="Hancock R.E.W."/>
            <person name="Lory S."/>
            <person name="Olson M.V."/>
        </authorList>
    </citation>
    <scope>NUCLEOTIDE SEQUENCE [LARGE SCALE GENOMIC DNA]</scope>
    <source>
        <strain>ATCC 15692 / DSM 22644 / CIP 104116 / JCM 14847 / LMG 12228 / 1C / PRS 101 / PAO1</strain>
    </source>
</reference>
<comment type="function">
    <text evidence="1">Essential cell division protein. May link together the upstream cell division proteins, which are predominantly cytoplasmic, with the downstream cell division proteins, which are predominantly periplasmic.</text>
</comment>
<comment type="subunit">
    <text evidence="1">Part of a complex composed of FtsB, FtsL and FtsQ.</text>
</comment>
<comment type="subcellular location">
    <subcellularLocation>
        <location evidence="1">Cell inner membrane</location>
        <topology evidence="1">Single-pass type II membrane protein</topology>
    </subcellularLocation>
    <text evidence="1">Localizes to the division septum.</text>
</comment>
<comment type="similarity">
    <text evidence="1">Belongs to the FtsB family.</text>
</comment>
<keyword id="KW-0002">3D-structure</keyword>
<keyword id="KW-0131">Cell cycle</keyword>
<keyword id="KW-0132">Cell division</keyword>
<keyword id="KW-0997">Cell inner membrane</keyword>
<keyword id="KW-1003">Cell membrane</keyword>
<keyword id="KW-0175">Coiled coil</keyword>
<keyword id="KW-0472">Membrane</keyword>
<keyword id="KW-1185">Reference proteome</keyword>
<keyword id="KW-0812">Transmembrane</keyword>
<keyword id="KW-1133">Transmembrane helix</keyword>
<sequence length="94" mass="10875">MRLRSPYWLFVVLILALAGLQYRLWVGDGSLAQVRDLQKQIADQHGENERLLERNRILEAEVAELKKGTETVEERARHELGMVKDGETLYQLAK</sequence>
<organism>
    <name type="scientific">Pseudomonas aeruginosa (strain ATCC 15692 / DSM 22644 / CIP 104116 / JCM 14847 / LMG 12228 / 1C / PRS 101 / PAO1)</name>
    <dbReference type="NCBI Taxonomy" id="208964"/>
    <lineage>
        <taxon>Bacteria</taxon>
        <taxon>Pseudomonadati</taxon>
        <taxon>Pseudomonadota</taxon>
        <taxon>Gammaproteobacteria</taxon>
        <taxon>Pseudomonadales</taxon>
        <taxon>Pseudomonadaceae</taxon>
        <taxon>Pseudomonas</taxon>
    </lineage>
</organism>
<protein>
    <recommendedName>
        <fullName evidence="1">Cell division protein FtsB</fullName>
    </recommendedName>
</protein>
<name>FTSB_PSEAE</name>
<dbReference type="EMBL" id="AE004091">
    <property type="protein sequence ID" value="AAG07022.1"/>
    <property type="molecule type" value="Genomic_DNA"/>
</dbReference>
<dbReference type="PIR" id="G83191">
    <property type="entry name" value="G83191"/>
</dbReference>
<dbReference type="RefSeq" id="NP_252324.1">
    <property type="nucleotide sequence ID" value="NC_002516.2"/>
</dbReference>
<dbReference type="RefSeq" id="WP_003098569.1">
    <property type="nucleotide sequence ID" value="NZ_QZGE01000001.1"/>
</dbReference>
<dbReference type="PDB" id="8BH1">
    <property type="method" value="EM"/>
    <property type="resolution" value="3.80 A"/>
    <property type="chains" value="E=1-94"/>
</dbReference>
<dbReference type="PDB" id="8P1U">
    <property type="method" value="EM"/>
    <property type="resolution" value="3.30 A"/>
    <property type="chains" value="D=1-94"/>
</dbReference>
<dbReference type="PDBsum" id="8BH1"/>
<dbReference type="PDBsum" id="8P1U"/>
<dbReference type="EMDB" id="EMD-16042"/>
<dbReference type="EMDB" id="EMD-17356"/>
<dbReference type="SMR" id="Q9HXZ6"/>
<dbReference type="FunCoup" id="Q9HXZ6">
    <property type="interactions" value="60"/>
</dbReference>
<dbReference type="STRING" id="208964.PA3634"/>
<dbReference type="PaxDb" id="208964-PA3634"/>
<dbReference type="DNASU" id="880452"/>
<dbReference type="GeneID" id="77219885"/>
<dbReference type="GeneID" id="880452"/>
<dbReference type="KEGG" id="pae:PA3634"/>
<dbReference type="PATRIC" id="fig|208964.12.peg.3803"/>
<dbReference type="PseudoCAP" id="PA3634"/>
<dbReference type="HOGENOM" id="CLU_134863_5_1_6"/>
<dbReference type="InParanoid" id="Q9HXZ6"/>
<dbReference type="OrthoDB" id="7061211at2"/>
<dbReference type="PhylomeDB" id="Q9HXZ6"/>
<dbReference type="BioCyc" id="PAER208964:G1FZ6-3704-MONOMER"/>
<dbReference type="Proteomes" id="UP000002438">
    <property type="component" value="Chromosome"/>
</dbReference>
<dbReference type="GO" id="GO:0032153">
    <property type="term" value="C:cell division site"/>
    <property type="evidence" value="ECO:0007669"/>
    <property type="project" value="UniProtKB-UniRule"/>
</dbReference>
<dbReference type="GO" id="GO:0030428">
    <property type="term" value="C:cell septum"/>
    <property type="evidence" value="ECO:0000318"/>
    <property type="project" value="GO_Central"/>
</dbReference>
<dbReference type="GO" id="GO:0005886">
    <property type="term" value="C:plasma membrane"/>
    <property type="evidence" value="ECO:0007669"/>
    <property type="project" value="UniProtKB-SubCell"/>
</dbReference>
<dbReference type="GO" id="GO:0043093">
    <property type="term" value="P:FtsZ-dependent cytokinesis"/>
    <property type="evidence" value="ECO:0000318"/>
    <property type="project" value="GO_Central"/>
</dbReference>
<dbReference type="HAMAP" id="MF_00599">
    <property type="entry name" value="FtsB"/>
    <property type="match status" value="1"/>
</dbReference>
<dbReference type="InterPro" id="IPR023081">
    <property type="entry name" value="Cell_div_FtsB"/>
</dbReference>
<dbReference type="InterPro" id="IPR007060">
    <property type="entry name" value="FtsL/DivIC"/>
</dbReference>
<dbReference type="NCBIfam" id="NF002058">
    <property type="entry name" value="PRK00888.1"/>
    <property type="match status" value="1"/>
</dbReference>
<dbReference type="PANTHER" id="PTHR37485">
    <property type="entry name" value="CELL DIVISION PROTEIN FTSB"/>
    <property type="match status" value="1"/>
</dbReference>
<dbReference type="PANTHER" id="PTHR37485:SF1">
    <property type="entry name" value="CELL DIVISION PROTEIN FTSB"/>
    <property type="match status" value="1"/>
</dbReference>
<dbReference type="Pfam" id="PF04977">
    <property type="entry name" value="DivIC"/>
    <property type="match status" value="1"/>
</dbReference>
<feature type="chain" id="PRO_0000414371" description="Cell division protein FtsB">
    <location>
        <begin position="1"/>
        <end position="94"/>
    </location>
</feature>
<feature type="topological domain" description="Cytoplasmic" evidence="1">
    <location>
        <begin position="1"/>
        <end position="8"/>
    </location>
</feature>
<feature type="transmembrane region" description="Helical" evidence="1">
    <location>
        <begin position="9"/>
        <end position="26"/>
    </location>
</feature>
<feature type="topological domain" description="Periplasmic" evidence="1">
    <location>
        <begin position="27"/>
        <end position="94"/>
    </location>
</feature>
<feature type="coiled-coil region" evidence="1">
    <location>
        <begin position="31"/>
        <end position="78"/>
    </location>
</feature>
<feature type="helix" evidence="2">
    <location>
        <begin position="9"/>
        <end position="25"/>
    </location>
</feature>
<feature type="helix" evidence="2">
    <location>
        <begin position="31"/>
        <end position="65"/>
    </location>
</feature>
<feature type="helix" evidence="2">
    <location>
        <begin position="70"/>
        <end position="78"/>
    </location>
</feature>
<feature type="strand" evidence="2">
    <location>
        <begin position="89"/>
        <end position="91"/>
    </location>
</feature>
<gene>
    <name evidence="1" type="primary">ftsB</name>
    <name type="ordered locus">PA3634</name>
</gene>